<organism>
    <name type="scientific">Deinococcus radiodurans (strain ATCC 13939 / DSM 20539 / JCM 16871 / CCUG 27074 / LMG 4051 / NBRC 15346 / NCIMB 9279 / VKM B-1422 / R1)</name>
    <dbReference type="NCBI Taxonomy" id="243230"/>
    <lineage>
        <taxon>Bacteria</taxon>
        <taxon>Thermotogati</taxon>
        <taxon>Deinococcota</taxon>
        <taxon>Deinococci</taxon>
        <taxon>Deinococcales</taxon>
        <taxon>Deinococcaceae</taxon>
        <taxon>Deinococcus</taxon>
    </lineage>
</organism>
<keyword id="KW-0028">Amino-acid biosynthesis</keyword>
<keyword id="KW-0055">Arginine biosynthesis</keyword>
<keyword id="KW-0963">Cytoplasm</keyword>
<keyword id="KW-1185">Reference proteome</keyword>
<keyword id="KW-0808">Transferase</keyword>
<reference key="1">
    <citation type="journal article" date="1999" name="Science">
        <title>Genome sequence of the radioresistant bacterium Deinococcus radiodurans R1.</title>
        <authorList>
            <person name="White O."/>
            <person name="Eisen J.A."/>
            <person name="Heidelberg J.F."/>
            <person name="Hickey E.K."/>
            <person name="Peterson J.D."/>
            <person name="Dodson R.J."/>
            <person name="Haft D.H."/>
            <person name="Gwinn M.L."/>
            <person name="Nelson W.C."/>
            <person name="Richardson D.L."/>
            <person name="Moffat K.S."/>
            <person name="Qin H."/>
            <person name="Jiang L."/>
            <person name="Pamphile W."/>
            <person name="Crosby M."/>
            <person name="Shen M."/>
            <person name="Vamathevan J.J."/>
            <person name="Lam P."/>
            <person name="McDonald L.A."/>
            <person name="Utterback T.R."/>
            <person name="Zalewski C."/>
            <person name="Makarova K.S."/>
            <person name="Aravind L."/>
            <person name="Daly M.J."/>
            <person name="Minton K.W."/>
            <person name="Fleischmann R.D."/>
            <person name="Ketchum K.A."/>
            <person name="Nelson K.E."/>
            <person name="Salzberg S.L."/>
            <person name="Smith H.O."/>
            <person name="Venter J.C."/>
            <person name="Fraser C.M."/>
        </authorList>
    </citation>
    <scope>NUCLEOTIDE SEQUENCE [LARGE SCALE GENOMIC DNA]</scope>
    <source>
        <strain>ATCC 13939 / DSM 20539 / JCM 16871 / CCUG 27074 / LMG 4051 / NBRC 15346 / NCIMB 9279 / VKM B-1422 / R1</strain>
    </source>
</reference>
<feature type="chain" id="PRO_0000112915" description="Ornithine carbamoyltransferase">
    <location>
        <begin position="1"/>
        <end position="308"/>
    </location>
</feature>
<feature type="binding site" evidence="2">
    <location>
        <position position="103"/>
    </location>
    <ligand>
        <name>carbamoyl phosphate</name>
        <dbReference type="ChEBI" id="CHEBI:58228"/>
    </ligand>
</feature>
<feature type="binding site" evidence="2">
    <location>
        <begin position="130"/>
        <end position="133"/>
    </location>
    <ligand>
        <name>carbamoyl phosphate</name>
        <dbReference type="ChEBI" id="CHEBI:58228"/>
    </ligand>
</feature>
<feature type="binding site" evidence="2">
    <location>
        <position position="162"/>
    </location>
    <ligand>
        <name>L-ornithine</name>
        <dbReference type="ChEBI" id="CHEBI:46911"/>
    </ligand>
</feature>
<feature type="binding site" evidence="2">
    <location>
        <position position="221"/>
    </location>
    <ligand>
        <name>L-ornithine</name>
        <dbReference type="ChEBI" id="CHEBI:46911"/>
    </ligand>
</feature>
<feature type="binding site" evidence="2">
    <location>
        <begin position="225"/>
        <end position="226"/>
    </location>
    <ligand>
        <name>L-ornithine</name>
        <dbReference type="ChEBI" id="CHEBI:46911"/>
    </ligand>
</feature>
<feature type="binding site" evidence="2">
    <location>
        <begin position="261"/>
        <end position="262"/>
    </location>
    <ligand>
        <name>carbamoyl phosphate</name>
        <dbReference type="ChEBI" id="CHEBI:58228"/>
    </ligand>
</feature>
<feature type="binding site" evidence="2">
    <location>
        <position position="289"/>
    </location>
    <ligand>
        <name>carbamoyl phosphate</name>
        <dbReference type="ChEBI" id="CHEBI:58228"/>
    </ligand>
</feature>
<protein>
    <recommendedName>
        <fullName evidence="2">Ornithine carbamoyltransferase</fullName>
        <shortName evidence="2">OTCase</shortName>
        <ecNumber evidence="2">2.1.3.3</ecNumber>
    </recommendedName>
</protein>
<sequence>MLAGRDFLSNLDMTSAELRAVMDTAHSMKAGEWRAVKPLSGLSLALVFEKASLRTRTTFDVGMYQLGGHAITLSNTEIGLGTRERVSDVARNLERWVDGVMGRVYLQQTLVELAQHARIPVINGLSDMLHPAQLLADYQTIEEEFGQDLRGKRVVYIGDGNNLANSHIHMGILTGTDVTVVTPVGYEPNAGVLMDAVKAGVEVHLTNDLDAIQGADVLYTDVWISMGQEAEADIRRRAFRGYQVTPEMLETISPDGIFLHCLPAHYGEETVPEATEHPKSRVFDQAENRLHAQKALLYHVLGDMKPRW</sequence>
<proteinExistence type="inferred from homology"/>
<comment type="function">
    <text evidence="1">Reversibly catalyzes the transfer of the carbamoyl group from carbamoyl phosphate (CP) to the N(epsilon) atom of ornithine (ORN) to produce L-citrulline.</text>
</comment>
<comment type="catalytic activity">
    <reaction evidence="2">
        <text>carbamoyl phosphate + L-ornithine = L-citrulline + phosphate + H(+)</text>
        <dbReference type="Rhea" id="RHEA:19513"/>
        <dbReference type="ChEBI" id="CHEBI:15378"/>
        <dbReference type="ChEBI" id="CHEBI:43474"/>
        <dbReference type="ChEBI" id="CHEBI:46911"/>
        <dbReference type="ChEBI" id="CHEBI:57743"/>
        <dbReference type="ChEBI" id="CHEBI:58228"/>
        <dbReference type="EC" id="2.1.3.3"/>
    </reaction>
</comment>
<comment type="pathway">
    <text evidence="2">Amino-acid biosynthesis; L-arginine biosynthesis; L-arginine from L-ornithine and carbamoyl phosphate: step 1/3.</text>
</comment>
<comment type="subcellular location">
    <subcellularLocation>
        <location evidence="2">Cytoplasm</location>
    </subcellularLocation>
</comment>
<comment type="similarity">
    <text evidence="2">Belongs to the aspartate/ornithine carbamoyltransferase superfamily. OTCase family.</text>
</comment>
<comment type="caution">
    <text evidence="3">Lacks the conserved threonine residue in position 53, which is part of the carbamoylphosphate binding site; it is replaced by a leucine residue.</text>
</comment>
<comment type="sequence caution" evidence="3">
    <conflict type="erroneous initiation">
        <sequence resource="EMBL-CDS" id="AAF09673"/>
    </conflict>
</comment>
<dbReference type="EC" id="2.1.3.3" evidence="2"/>
<dbReference type="EMBL" id="AE000513">
    <property type="protein sequence ID" value="AAF09673.1"/>
    <property type="status" value="ALT_INIT"/>
    <property type="molecule type" value="Genomic_DNA"/>
</dbReference>
<dbReference type="PIR" id="F75562">
    <property type="entry name" value="F75562"/>
</dbReference>
<dbReference type="RefSeq" id="NP_293806.1">
    <property type="nucleotide sequence ID" value="NC_001263.1"/>
</dbReference>
<dbReference type="SMR" id="Q9RY70"/>
<dbReference type="FunCoup" id="Q9RY70">
    <property type="interactions" value="428"/>
</dbReference>
<dbReference type="STRING" id="243230.DR_0080"/>
<dbReference type="PaxDb" id="243230-DR_0080"/>
<dbReference type="EnsemblBacteria" id="AAF09673">
    <property type="protein sequence ID" value="AAF09673"/>
    <property type="gene ID" value="DR_0080"/>
</dbReference>
<dbReference type="KEGG" id="dra:DR_0080"/>
<dbReference type="PATRIC" id="fig|243230.17.peg.243"/>
<dbReference type="eggNOG" id="COG0078">
    <property type="taxonomic scope" value="Bacteria"/>
</dbReference>
<dbReference type="HOGENOM" id="CLU_043846_3_2_0"/>
<dbReference type="InParanoid" id="Q9RY70"/>
<dbReference type="OrthoDB" id="9802587at2"/>
<dbReference type="UniPathway" id="UPA00068">
    <property type="reaction ID" value="UER00112"/>
</dbReference>
<dbReference type="Proteomes" id="UP000002524">
    <property type="component" value="Chromosome 1"/>
</dbReference>
<dbReference type="GO" id="GO:0005737">
    <property type="term" value="C:cytoplasm"/>
    <property type="evidence" value="ECO:0007669"/>
    <property type="project" value="UniProtKB-SubCell"/>
</dbReference>
<dbReference type="GO" id="GO:0016597">
    <property type="term" value="F:amino acid binding"/>
    <property type="evidence" value="ECO:0007669"/>
    <property type="project" value="InterPro"/>
</dbReference>
<dbReference type="GO" id="GO:0004585">
    <property type="term" value="F:ornithine carbamoyltransferase activity"/>
    <property type="evidence" value="ECO:0000318"/>
    <property type="project" value="GO_Central"/>
</dbReference>
<dbReference type="GO" id="GO:0042450">
    <property type="term" value="P:arginine biosynthetic process via ornithine"/>
    <property type="evidence" value="ECO:0000318"/>
    <property type="project" value="GO_Central"/>
</dbReference>
<dbReference type="GO" id="GO:0019240">
    <property type="term" value="P:citrulline biosynthetic process"/>
    <property type="evidence" value="ECO:0000318"/>
    <property type="project" value="GO_Central"/>
</dbReference>
<dbReference type="GO" id="GO:0006526">
    <property type="term" value="P:L-arginine biosynthetic process"/>
    <property type="evidence" value="ECO:0007669"/>
    <property type="project" value="UniProtKB-UniRule"/>
</dbReference>
<dbReference type="FunFam" id="3.40.50.1370:FF:000008">
    <property type="entry name" value="Ornithine carbamoyltransferase"/>
    <property type="match status" value="1"/>
</dbReference>
<dbReference type="FunFam" id="3.40.50.1370:FF:000024">
    <property type="entry name" value="Ornithine carbamoyltransferase"/>
    <property type="match status" value="1"/>
</dbReference>
<dbReference type="Gene3D" id="3.40.50.1370">
    <property type="entry name" value="Aspartate/ornithine carbamoyltransferase"/>
    <property type="match status" value="2"/>
</dbReference>
<dbReference type="HAMAP" id="MF_01109">
    <property type="entry name" value="OTCase"/>
    <property type="match status" value="1"/>
</dbReference>
<dbReference type="InterPro" id="IPR006132">
    <property type="entry name" value="Asp/Orn_carbamoyltranf_P-bd"/>
</dbReference>
<dbReference type="InterPro" id="IPR006130">
    <property type="entry name" value="Asp/Orn_carbamoylTrfase"/>
</dbReference>
<dbReference type="InterPro" id="IPR036901">
    <property type="entry name" value="Asp/Orn_carbamoylTrfase_sf"/>
</dbReference>
<dbReference type="InterPro" id="IPR006131">
    <property type="entry name" value="Asp_carbamoyltransf_Asp/Orn-bd"/>
</dbReference>
<dbReference type="InterPro" id="IPR002292">
    <property type="entry name" value="Orn/put_carbamltrans"/>
</dbReference>
<dbReference type="InterPro" id="IPR024904">
    <property type="entry name" value="OTCase_ArgI"/>
</dbReference>
<dbReference type="NCBIfam" id="TIGR00658">
    <property type="entry name" value="orni_carb_tr"/>
    <property type="match status" value="1"/>
</dbReference>
<dbReference type="NCBIfam" id="NF001986">
    <property type="entry name" value="PRK00779.1"/>
    <property type="match status" value="1"/>
</dbReference>
<dbReference type="PANTHER" id="PTHR45753">
    <property type="entry name" value="ORNITHINE CARBAMOYLTRANSFERASE, MITOCHONDRIAL"/>
    <property type="match status" value="1"/>
</dbReference>
<dbReference type="PANTHER" id="PTHR45753:SF3">
    <property type="entry name" value="ORNITHINE TRANSCARBAMYLASE, MITOCHONDRIAL"/>
    <property type="match status" value="1"/>
</dbReference>
<dbReference type="Pfam" id="PF00185">
    <property type="entry name" value="OTCace"/>
    <property type="match status" value="1"/>
</dbReference>
<dbReference type="Pfam" id="PF02729">
    <property type="entry name" value="OTCace_N"/>
    <property type="match status" value="1"/>
</dbReference>
<dbReference type="PRINTS" id="PR00100">
    <property type="entry name" value="AOTCASE"/>
</dbReference>
<dbReference type="PRINTS" id="PR00102">
    <property type="entry name" value="OTCASE"/>
</dbReference>
<dbReference type="SUPFAM" id="SSF53671">
    <property type="entry name" value="Aspartate/ornithine carbamoyltransferase"/>
    <property type="match status" value="1"/>
</dbReference>
<evidence type="ECO:0000250" key="1"/>
<evidence type="ECO:0000255" key="2">
    <source>
        <dbReference type="HAMAP-Rule" id="MF_01109"/>
    </source>
</evidence>
<evidence type="ECO:0000305" key="3"/>
<name>OTC_DEIRA</name>
<gene>
    <name evidence="2" type="primary">argF</name>
    <name type="ordered locus">DR_0080</name>
</gene>
<accession>Q9RY70</accession>